<keyword id="KW-1003">Cell membrane</keyword>
<keyword id="KW-0472">Membrane</keyword>
<keyword id="KW-0520">NAD</keyword>
<keyword id="KW-0874">Quinone</keyword>
<keyword id="KW-1278">Translocase</keyword>
<keyword id="KW-0813">Transport</keyword>
<comment type="function">
    <text evidence="1">NDH-1 shuttles electrons from NADH, via FMN and iron-sulfur (Fe-S) centers, to quinones in the respiratory chain. The immediate electron acceptor for the enzyme in this species is believed to be a menaquinone. Couples the redox reaction to proton translocation (for every two electrons transferred, four hydrogen ions are translocated across the cytoplasmic membrane), and thus conserves the redox energy in a proton gradient.</text>
</comment>
<comment type="catalytic activity">
    <reaction evidence="1">
        <text>a quinone + NADH + 5 H(+)(in) = a quinol + NAD(+) + 4 H(+)(out)</text>
        <dbReference type="Rhea" id="RHEA:57888"/>
        <dbReference type="ChEBI" id="CHEBI:15378"/>
        <dbReference type="ChEBI" id="CHEBI:24646"/>
        <dbReference type="ChEBI" id="CHEBI:57540"/>
        <dbReference type="ChEBI" id="CHEBI:57945"/>
        <dbReference type="ChEBI" id="CHEBI:132124"/>
    </reaction>
</comment>
<comment type="subunit">
    <text evidence="1">NDH-1 is composed of 14 different subunits. Subunits NuoB, C, D, E, F, and G constitute the peripheral sector of the complex.</text>
</comment>
<comment type="subcellular location">
    <subcellularLocation>
        <location evidence="1">Cell membrane</location>
        <topology evidence="1">Peripheral membrane protein</topology>
        <orientation evidence="1">Cytoplasmic side</orientation>
    </subcellularLocation>
</comment>
<comment type="similarity">
    <text evidence="1">Belongs to the complex I 49 kDa subunit family.</text>
</comment>
<gene>
    <name evidence="1" type="primary">nuoD</name>
    <name type="ordered locus">Mvan_1882</name>
</gene>
<proteinExistence type="inferred from homology"/>
<organism>
    <name type="scientific">Mycolicibacterium vanbaalenii (strain DSM 7251 / JCM 13017 / BCRC 16820 / KCTC 9966 / NRRL B-24157 / PYR-1)</name>
    <name type="common">Mycobacterium vanbaalenii</name>
    <dbReference type="NCBI Taxonomy" id="350058"/>
    <lineage>
        <taxon>Bacteria</taxon>
        <taxon>Bacillati</taxon>
        <taxon>Actinomycetota</taxon>
        <taxon>Actinomycetes</taxon>
        <taxon>Mycobacteriales</taxon>
        <taxon>Mycobacteriaceae</taxon>
        <taxon>Mycolicibacterium</taxon>
    </lineage>
</organism>
<dbReference type="EC" id="7.1.1.-" evidence="1"/>
<dbReference type="EMBL" id="CP000511">
    <property type="protein sequence ID" value="ABM12703.1"/>
    <property type="molecule type" value="Genomic_DNA"/>
</dbReference>
<dbReference type="RefSeq" id="WP_011779121.1">
    <property type="nucleotide sequence ID" value="NC_008726.1"/>
</dbReference>
<dbReference type="SMR" id="A1T6A3"/>
<dbReference type="STRING" id="350058.Mvan_1882"/>
<dbReference type="KEGG" id="mva:Mvan_1882"/>
<dbReference type="eggNOG" id="COG0649">
    <property type="taxonomic scope" value="Bacteria"/>
</dbReference>
<dbReference type="HOGENOM" id="CLU_015134_1_2_11"/>
<dbReference type="Proteomes" id="UP000009159">
    <property type="component" value="Chromosome"/>
</dbReference>
<dbReference type="GO" id="GO:0005886">
    <property type="term" value="C:plasma membrane"/>
    <property type="evidence" value="ECO:0007669"/>
    <property type="project" value="UniProtKB-SubCell"/>
</dbReference>
<dbReference type="GO" id="GO:0051287">
    <property type="term" value="F:NAD binding"/>
    <property type="evidence" value="ECO:0007669"/>
    <property type="project" value="InterPro"/>
</dbReference>
<dbReference type="GO" id="GO:0050136">
    <property type="term" value="F:NADH:ubiquinone reductase (non-electrogenic) activity"/>
    <property type="evidence" value="ECO:0007669"/>
    <property type="project" value="UniProtKB-UniRule"/>
</dbReference>
<dbReference type="GO" id="GO:0048038">
    <property type="term" value="F:quinone binding"/>
    <property type="evidence" value="ECO:0007669"/>
    <property type="project" value="UniProtKB-KW"/>
</dbReference>
<dbReference type="Gene3D" id="1.10.645.10">
    <property type="entry name" value="Cytochrome-c3 Hydrogenase, chain B"/>
    <property type="match status" value="1"/>
</dbReference>
<dbReference type="HAMAP" id="MF_01358">
    <property type="entry name" value="NDH1_NuoD"/>
    <property type="match status" value="1"/>
</dbReference>
<dbReference type="InterPro" id="IPR001135">
    <property type="entry name" value="NADH_Q_OxRdtase_suD"/>
</dbReference>
<dbReference type="InterPro" id="IPR014029">
    <property type="entry name" value="NADH_UbQ_OxRdtase_49kDa_CS"/>
</dbReference>
<dbReference type="InterPro" id="IPR022885">
    <property type="entry name" value="NDH1_su_D/H"/>
</dbReference>
<dbReference type="InterPro" id="IPR029014">
    <property type="entry name" value="NiFe-Hase_large"/>
</dbReference>
<dbReference type="NCBIfam" id="TIGR01962">
    <property type="entry name" value="NuoD"/>
    <property type="match status" value="1"/>
</dbReference>
<dbReference type="NCBIfam" id="NF004739">
    <property type="entry name" value="PRK06075.1"/>
    <property type="match status" value="1"/>
</dbReference>
<dbReference type="PANTHER" id="PTHR11993:SF10">
    <property type="entry name" value="NADH DEHYDROGENASE [UBIQUINONE] IRON-SULFUR PROTEIN 2, MITOCHONDRIAL"/>
    <property type="match status" value="1"/>
</dbReference>
<dbReference type="PANTHER" id="PTHR11993">
    <property type="entry name" value="NADH-UBIQUINONE OXIDOREDUCTASE 49 KDA SUBUNIT"/>
    <property type="match status" value="1"/>
</dbReference>
<dbReference type="Pfam" id="PF00346">
    <property type="entry name" value="Complex1_49kDa"/>
    <property type="match status" value="1"/>
</dbReference>
<dbReference type="SUPFAM" id="SSF56762">
    <property type="entry name" value="HydB/Nqo4-like"/>
    <property type="match status" value="1"/>
</dbReference>
<dbReference type="PROSITE" id="PS00535">
    <property type="entry name" value="COMPLEX1_49K"/>
    <property type="match status" value="1"/>
</dbReference>
<reference key="1">
    <citation type="submission" date="2006-12" db="EMBL/GenBank/DDBJ databases">
        <title>Complete sequence of Mycobacterium vanbaalenii PYR-1.</title>
        <authorList>
            <consortium name="US DOE Joint Genome Institute"/>
            <person name="Copeland A."/>
            <person name="Lucas S."/>
            <person name="Lapidus A."/>
            <person name="Barry K."/>
            <person name="Detter J.C."/>
            <person name="Glavina del Rio T."/>
            <person name="Hammon N."/>
            <person name="Israni S."/>
            <person name="Dalin E."/>
            <person name="Tice H."/>
            <person name="Pitluck S."/>
            <person name="Singan V."/>
            <person name="Schmutz J."/>
            <person name="Larimer F."/>
            <person name="Land M."/>
            <person name="Hauser L."/>
            <person name="Kyrpides N."/>
            <person name="Anderson I.J."/>
            <person name="Miller C."/>
            <person name="Richardson P."/>
        </authorList>
    </citation>
    <scope>NUCLEOTIDE SEQUENCE [LARGE SCALE GENOMIC DNA]</scope>
    <source>
        <strain>DSM 7251 / JCM 13017 / BCRC 16820 / KCTC 9966 / NRRL B-24157 / PYR-1</strain>
    </source>
</reference>
<protein>
    <recommendedName>
        <fullName evidence="1">NADH-quinone oxidoreductase subunit D</fullName>
        <ecNumber evidence="1">7.1.1.-</ecNumber>
    </recommendedName>
    <alternativeName>
        <fullName evidence="1">NADH dehydrogenase I subunit D</fullName>
    </alternativeName>
    <alternativeName>
        <fullName evidence="1">NDH-1 subunit D</fullName>
    </alternativeName>
</protein>
<name>NUOD_MYCVP</name>
<accession>A1T6A3</accession>
<sequence>MTTSQQPPERVVVVGGQDWDQVVAAARQNAAEHAGERIVVNMGPQHPSTHGVLRLILEIEGEIIVEARCGIGYLHTGIEKNLEFRNWTQGVTFVTRMDYLSPFFNETAYCLGVEKLLGITDAIPERASVIRVMMMELNRISSHLVALATGGMELGAMTAMFLGFRERELILSVFETITGLRMNNAYIRPGGVAADLPDEALPQVRDLLTLLPKRLRDMEDLLNENYIWKARTQGIGYLDLTGCMALGITGPVLRSTGLPHDLRKAQPYCGYETYDFDVVTDDQCDSYGRYLIRVKEMHQSIRIVEQCVQRLERSVGAPVMITDKKLAWPADLKVGPDGLGNSPEHIAKIMGHSMEGLIHHFKLVTEGIRVPAGQVYVAVESPRGELGVHMVSDGGTRPYRVHYRDPSFTNLQAVAAMCEGGMVADAITAVASIDPVMGGVDR</sequence>
<feature type="chain" id="PRO_0000357864" description="NADH-quinone oxidoreductase subunit D">
    <location>
        <begin position="1"/>
        <end position="442"/>
    </location>
</feature>
<evidence type="ECO:0000255" key="1">
    <source>
        <dbReference type="HAMAP-Rule" id="MF_01358"/>
    </source>
</evidence>